<comment type="function">
    <text evidence="1">Key component of the proton channel; it plays a direct role in the translocation of protons across the membrane.</text>
</comment>
<comment type="subunit">
    <text evidence="1">F-type ATPases have 2 components, CF(1) - the catalytic core - and CF(0) - the membrane proton channel. CF(1) has five subunits: alpha(3), beta(3), gamma(1), delta(1), epsilon(1). CF(0) has three main subunits: a(1), b(2) and c(9-12). The alpha and beta chains form an alternating ring which encloses part of the gamma chain. CF(1) is attached to CF(0) by a central stalk formed by the gamma and epsilon chains, while a peripheral stalk is formed by the delta and b chains.</text>
</comment>
<comment type="subcellular location">
    <subcellularLocation>
        <location evidence="1">Cell inner membrane</location>
        <topology evidence="1">Multi-pass membrane protein</topology>
    </subcellularLocation>
</comment>
<comment type="similarity">
    <text evidence="1">Belongs to the ATPase A chain family.</text>
</comment>
<gene>
    <name evidence="1" type="primary">atpB</name>
    <name type="ordered locus">A1G_00175</name>
</gene>
<feature type="chain" id="PRO_0000362428" description="ATP synthase subunit a">
    <location>
        <begin position="1"/>
        <end position="242"/>
    </location>
</feature>
<feature type="transmembrane region" description="Helical" evidence="1">
    <location>
        <begin position="29"/>
        <end position="49"/>
    </location>
</feature>
<feature type="transmembrane region" description="Helical" evidence="1">
    <location>
        <begin position="84"/>
        <end position="104"/>
    </location>
</feature>
<feature type="transmembrane region" description="Helical" evidence="1">
    <location>
        <begin position="114"/>
        <end position="134"/>
    </location>
</feature>
<feature type="transmembrane region" description="Helical" evidence="1">
    <location>
        <begin position="140"/>
        <end position="160"/>
    </location>
</feature>
<feature type="transmembrane region" description="Helical" evidence="1">
    <location>
        <begin position="181"/>
        <end position="201"/>
    </location>
</feature>
<feature type="transmembrane region" description="Helical" evidence="1">
    <location>
        <begin position="203"/>
        <end position="223"/>
    </location>
</feature>
<sequence>MTHSPLAQFDIKKLIDIKMFGFDVSFTNSSIYMLLASILALTYFYLAFYKRKLVPSRLQVSAEIVYNLVADMLNQNIGVKGRKFIPLVFSLFIFILFCNLLGMTPYSFTATSHIIVTFTLAILVFLIVTIVGFVKHGLRFLTLFLPHGTPLWLAPLMIVIELFTYLARPVSLSLRLAANMMAGHVLLKVIAGFTVSLMIYLKFLPIPIMVILIGFEIFVAILQAYIFTILSCMYLNDAINLH</sequence>
<evidence type="ECO:0000255" key="1">
    <source>
        <dbReference type="HAMAP-Rule" id="MF_01393"/>
    </source>
</evidence>
<accession>A8GQF6</accession>
<dbReference type="EMBL" id="CP000848">
    <property type="protein sequence ID" value="ABV75631.1"/>
    <property type="molecule type" value="Genomic_DNA"/>
</dbReference>
<dbReference type="RefSeq" id="WP_012150256.1">
    <property type="nucleotide sequence ID" value="NZ_CP121767.1"/>
</dbReference>
<dbReference type="SMR" id="A8GQF6"/>
<dbReference type="GeneID" id="79936840"/>
<dbReference type="KEGG" id="rri:A1G_00175"/>
<dbReference type="HOGENOM" id="CLU_041018_0_2_5"/>
<dbReference type="Proteomes" id="UP000006832">
    <property type="component" value="Chromosome"/>
</dbReference>
<dbReference type="GO" id="GO:0005886">
    <property type="term" value="C:plasma membrane"/>
    <property type="evidence" value="ECO:0007669"/>
    <property type="project" value="UniProtKB-SubCell"/>
</dbReference>
<dbReference type="GO" id="GO:0045259">
    <property type="term" value="C:proton-transporting ATP synthase complex"/>
    <property type="evidence" value="ECO:0007669"/>
    <property type="project" value="UniProtKB-KW"/>
</dbReference>
<dbReference type="GO" id="GO:0046933">
    <property type="term" value="F:proton-transporting ATP synthase activity, rotational mechanism"/>
    <property type="evidence" value="ECO:0007669"/>
    <property type="project" value="UniProtKB-UniRule"/>
</dbReference>
<dbReference type="CDD" id="cd00310">
    <property type="entry name" value="ATP-synt_Fo_a_6"/>
    <property type="match status" value="1"/>
</dbReference>
<dbReference type="FunFam" id="1.20.120.220:FF:000003">
    <property type="entry name" value="ATP synthase subunit a"/>
    <property type="match status" value="1"/>
</dbReference>
<dbReference type="Gene3D" id="1.20.120.220">
    <property type="entry name" value="ATP synthase, F0 complex, subunit A"/>
    <property type="match status" value="1"/>
</dbReference>
<dbReference type="HAMAP" id="MF_01393">
    <property type="entry name" value="ATP_synth_a_bact"/>
    <property type="match status" value="1"/>
</dbReference>
<dbReference type="InterPro" id="IPR000568">
    <property type="entry name" value="ATP_synth_F0_asu"/>
</dbReference>
<dbReference type="InterPro" id="IPR023011">
    <property type="entry name" value="ATP_synth_F0_asu_AS"/>
</dbReference>
<dbReference type="InterPro" id="IPR045083">
    <property type="entry name" value="ATP_synth_F0_asu_bact/mt"/>
</dbReference>
<dbReference type="InterPro" id="IPR035908">
    <property type="entry name" value="F0_ATP_A_sf"/>
</dbReference>
<dbReference type="NCBIfam" id="TIGR01131">
    <property type="entry name" value="ATP_synt_6_or_A"/>
    <property type="match status" value="1"/>
</dbReference>
<dbReference type="NCBIfam" id="NF004482">
    <property type="entry name" value="PRK05815.2-4"/>
    <property type="match status" value="1"/>
</dbReference>
<dbReference type="PANTHER" id="PTHR11410">
    <property type="entry name" value="ATP SYNTHASE SUBUNIT A"/>
    <property type="match status" value="1"/>
</dbReference>
<dbReference type="PANTHER" id="PTHR11410:SF0">
    <property type="entry name" value="ATP SYNTHASE SUBUNIT A"/>
    <property type="match status" value="1"/>
</dbReference>
<dbReference type="Pfam" id="PF00119">
    <property type="entry name" value="ATP-synt_A"/>
    <property type="match status" value="1"/>
</dbReference>
<dbReference type="PRINTS" id="PR00123">
    <property type="entry name" value="ATPASEA"/>
</dbReference>
<dbReference type="SUPFAM" id="SSF81336">
    <property type="entry name" value="F1F0 ATP synthase subunit A"/>
    <property type="match status" value="1"/>
</dbReference>
<dbReference type="PROSITE" id="PS00449">
    <property type="entry name" value="ATPASE_A"/>
    <property type="match status" value="1"/>
</dbReference>
<reference key="1">
    <citation type="submission" date="2007-09" db="EMBL/GenBank/DDBJ databases">
        <title>Complete genome sequence of Rickettsia rickettsii.</title>
        <authorList>
            <person name="Madan A."/>
            <person name="Fahey J."/>
            <person name="Helton E."/>
            <person name="Ketteman M."/>
            <person name="Madan A."/>
            <person name="Rodrigues S."/>
            <person name="Sanchez A."/>
            <person name="Dasch G."/>
            <person name="Eremeeva M."/>
        </authorList>
    </citation>
    <scope>NUCLEOTIDE SEQUENCE [LARGE SCALE GENOMIC DNA]</scope>
    <source>
        <strain>Sheila Smith</strain>
    </source>
</reference>
<protein>
    <recommendedName>
        <fullName evidence="1">ATP synthase subunit a</fullName>
    </recommendedName>
    <alternativeName>
        <fullName evidence="1">ATP synthase F0 sector subunit a</fullName>
    </alternativeName>
    <alternativeName>
        <fullName evidence="1">F-ATPase subunit 6</fullName>
    </alternativeName>
</protein>
<keyword id="KW-0066">ATP synthesis</keyword>
<keyword id="KW-0997">Cell inner membrane</keyword>
<keyword id="KW-1003">Cell membrane</keyword>
<keyword id="KW-0138">CF(0)</keyword>
<keyword id="KW-0375">Hydrogen ion transport</keyword>
<keyword id="KW-0406">Ion transport</keyword>
<keyword id="KW-0472">Membrane</keyword>
<keyword id="KW-0812">Transmembrane</keyword>
<keyword id="KW-1133">Transmembrane helix</keyword>
<keyword id="KW-0813">Transport</keyword>
<proteinExistence type="inferred from homology"/>
<name>ATP6_RICRS</name>
<organism>
    <name type="scientific">Rickettsia rickettsii (strain Sheila Smith)</name>
    <dbReference type="NCBI Taxonomy" id="392021"/>
    <lineage>
        <taxon>Bacteria</taxon>
        <taxon>Pseudomonadati</taxon>
        <taxon>Pseudomonadota</taxon>
        <taxon>Alphaproteobacteria</taxon>
        <taxon>Rickettsiales</taxon>
        <taxon>Rickettsiaceae</taxon>
        <taxon>Rickettsieae</taxon>
        <taxon>Rickettsia</taxon>
        <taxon>spotted fever group</taxon>
    </lineage>
</organism>